<keyword id="KW-0489">Methyltransferase</keyword>
<keyword id="KW-0949">S-adenosyl-L-methionine</keyword>
<keyword id="KW-0808">Transferase</keyword>
<keyword id="KW-0819">tRNA processing</keyword>
<sequence length="366" mass="41877">MTPEHLPTEQYEAQLAEKVARLQSMMAPFSGLVPEVFRSPVSHYRMRAEFRLWHDGDNLYHIMFDQQTKSRIRVDTFPAASQLINTLMKAMIAGVRDNHALRHKLFQIDYLTTLSNQAVVSLLYHKKLDEEWREAATALRDALRAQGLNVHLIGRATKTKIELDQDYIDERLPVAGKEIIYRQVENSFTQPNAAMNIQMLEWALEVTKDSKGDLLELYCGNGNFSLALARNFNRVLATEIAKPSVAAAQYNIAANHIDNVQIIRMAAEEFTQAMNGVREFNRLQGIDLKRYQCETIFVDPPRSGLDSETEKMVQAYPRILYISCNPETLCKNLETLSQTHTVSRLALFDQFPYTHHMECGVLLTAR</sequence>
<reference key="1">
    <citation type="journal article" date="2001" name="Nature">
        <title>Complete genome sequence of a multiple drug resistant Salmonella enterica serovar Typhi CT18.</title>
        <authorList>
            <person name="Parkhill J."/>
            <person name="Dougan G."/>
            <person name="James K.D."/>
            <person name="Thomson N.R."/>
            <person name="Pickard D."/>
            <person name="Wain J."/>
            <person name="Churcher C.M."/>
            <person name="Mungall K.L."/>
            <person name="Bentley S.D."/>
            <person name="Holden M.T.G."/>
            <person name="Sebaihia M."/>
            <person name="Baker S."/>
            <person name="Basham D."/>
            <person name="Brooks K."/>
            <person name="Chillingworth T."/>
            <person name="Connerton P."/>
            <person name="Cronin A."/>
            <person name="Davis P."/>
            <person name="Davies R.M."/>
            <person name="Dowd L."/>
            <person name="White N."/>
            <person name="Farrar J."/>
            <person name="Feltwell T."/>
            <person name="Hamlin N."/>
            <person name="Haque A."/>
            <person name="Hien T.T."/>
            <person name="Holroyd S."/>
            <person name="Jagels K."/>
            <person name="Krogh A."/>
            <person name="Larsen T.S."/>
            <person name="Leather S."/>
            <person name="Moule S."/>
            <person name="O'Gaora P."/>
            <person name="Parry C."/>
            <person name="Quail M.A."/>
            <person name="Rutherford K.M."/>
            <person name="Simmonds M."/>
            <person name="Skelton J."/>
            <person name="Stevens K."/>
            <person name="Whitehead S."/>
            <person name="Barrell B.G."/>
        </authorList>
    </citation>
    <scope>NUCLEOTIDE SEQUENCE [LARGE SCALE GENOMIC DNA]</scope>
    <source>
        <strain>CT18</strain>
    </source>
</reference>
<reference key="2">
    <citation type="journal article" date="2003" name="J. Bacteriol.">
        <title>Comparative genomics of Salmonella enterica serovar Typhi strains Ty2 and CT18.</title>
        <authorList>
            <person name="Deng W."/>
            <person name="Liou S.-R."/>
            <person name="Plunkett G. III"/>
            <person name="Mayhew G.F."/>
            <person name="Rose D.J."/>
            <person name="Burland V."/>
            <person name="Kodoyianni V."/>
            <person name="Schwartz D.C."/>
            <person name="Blattner F.R."/>
        </authorList>
    </citation>
    <scope>NUCLEOTIDE SEQUENCE [LARGE SCALE GENOMIC DNA]</scope>
    <source>
        <strain>ATCC 700931 / Ty2</strain>
    </source>
</reference>
<gene>
    <name evidence="1" type="primary">trmA</name>
    <name type="ordered locus">STY3745</name>
    <name type="ordered locus">t3496</name>
</gene>
<feature type="chain" id="PRO_0000161876" description="tRNA/tmRNA (uracil-C(5))-methyltransferase">
    <location>
        <begin position="1"/>
        <end position="366"/>
    </location>
</feature>
<feature type="active site" description="Nucleophile" evidence="1">
    <location>
        <position position="324"/>
    </location>
</feature>
<feature type="active site" description="Proton acceptor" evidence="1">
    <location>
        <position position="358"/>
    </location>
</feature>
<feature type="binding site" evidence="1">
    <location>
        <position position="190"/>
    </location>
    <ligand>
        <name>S-adenosyl-L-methionine</name>
        <dbReference type="ChEBI" id="CHEBI:59789"/>
    </ligand>
</feature>
<feature type="binding site" evidence="1">
    <location>
        <position position="218"/>
    </location>
    <ligand>
        <name>S-adenosyl-L-methionine</name>
        <dbReference type="ChEBI" id="CHEBI:59789"/>
    </ligand>
</feature>
<feature type="binding site" evidence="1">
    <location>
        <position position="223"/>
    </location>
    <ligand>
        <name>S-adenosyl-L-methionine</name>
        <dbReference type="ChEBI" id="CHEBI:59789"/>
    </ligand>
</feature>
<feature type="binding site" evidence="1">
    <location>
        <position position="239"/>
    </location>
    <ligand>
        <name>S-adenosyl-L-methionine</name>
        <dbReference type="ChEBI" id="CHEBI:59789"/>
    </ligand>
</feature>
<feature type="binding site" evidence="1">
    <location>
        <position position="299"/>
    </location>
    <ligand>
        <name>S-adenosyl-L-methionine</name>
        <dbReference type="ChEBI" id="CHEBI:59789"/>
    </ligand>
</feature>
<proteinExistence type="inferred from homology"/>
<accession>Q8Z313</accession>
<comment type="function">
    <text evidence="1">Dual-specificity methyltransferase that catalyzes the formation of 5-methyluridine at position 54 (m5U54) in all tRNAs, and that of position 341 (m5U341) in tmRNA (transfer-mRNA).</text>
</comment>
<comment type="catalytic activity">
    <reaction evidence="1">
        <text>uridine(54) in tRNA + S-adenosyl-L-methionine = 5-methyluridine(54) in tRNA + S-adenosyl-L-homocysteine + H(+)</text>
        <dbReference type="Rhea" id="RHEA:42712"/>
        <dbReference type="Rhea" id="RHEA-COMP:10167"/>
        <dbReference type="Rhea" id="RHEA-COMP:10193"/>
        <dbReference type="ChEBI" id="CHEBI:15378"/>
        <dbReference type="ChEBI" id="CHEBI:57856"/>
        <dbReference type="ChEBI" id="CHEBI:59789"/>
        <dbReference type="ChEBI" id="CHEBI:65315"/>
        <dbReference type="ChEBI" id="CHEBI:74447"/>
        <dbReference type="EC" id="2.1.1.35"/>
    </reaction>
</comment>
<comment type="catalytic activity">
    <reaction evidence="1">
        <text>uridine(341) in tmRNA + S-adenosyl-L-methionine = 5-methyluridine(341) in tmRNA + S-adenosyl-L-homocysteine + H(+)</text>
        <dbReference type="Rhea" id="RHEA:43612"/>
        <dbReference type="Rhea" id="RHEA-COMP:10630"/>
        <dbReference type="Rhea" id="RHEA-COMP:10631"/>
        <dbReference type="ChEBI" id="CHEBI:15378"/>
        <dbReference type="ChEBI" id="CHEBI:57856"/>
        <dbReference type="ChEBI" id="CHEBI:59789"/>
        <dbReference type="ChEBI" id="CHEBI:65315"/>
        <dbReference type="ChEBI" id="CHEBI:74447"/>
    </reaction>
</comment>
<comment type="similarity">
    <text evidence="1">Belongs to the class I-like SAM-binding methyltransferase superfamily. RNA M5U methyltransferase family. TrmA subfamily.</text>
</comment>
<name>TRMA_SALTI</name>
<organism>
    <name type="scientific">Salmonella typhi</name>
    <dbReference type="NCBI Taxonomy" id="90370"/>
    <lineage>
        <taxon>Bacteria</taxon>
        <taxon>Pseudomonadati</taxon>
        <taxon>Pseudomonadota</taxon>
        <taxon>Gammaproteobacteria</taxon>
        <taxon>Enterobacterales</taxon>
        <taxon>Enterobacteriaceae</taxon>
        <taxon>Salmonella</taxon>
    </lineage>
</organism>
<protein>
    <recommendedName>
        <fullName evidence="1">tRNA/tmRNA (uracil-C(5))-methyltransferase</fullName>
        <ecNumber evidence="1">2.1.1.-</ecNumber>
        <ecNumber evidence="1">2.1.1.35</ecNumber>
    </recommendedName>
    <alternativeName>
        <fullName evidence="1">tRNA (uracil(54)-C(5))-methyltransferase</fullName>
    </alternativeName>
    <alternativeName>
        <fullName evidence="1">tRNA(m5U54)-methyltransferase</fullName>
        <shortName evidence="1">RUMT</shortName>
    </alternativeName>
    <alternativeName>
        <fullName evidence="1">tmRNA (uracil(341)-C(5))-methyltransferase</fullName>
    </alternativeName>
</protein>
<dbReference type="EC" id="2.1.1.-" evidence="1"/>
<dbReference type="EC" id="2.1.1.35" evidence="1"/>
<dbReference type="EMBL" id="AL513382">
    <property type="protein sequence ID" value="CAD09501.1"/>
    <property type="molecule type" value="Genomic_DNA"/>
</dbReference>
<dbReference type="EMBL" id="AE014613">
    <property type="protein sequence ID" value="AAO71004.1"/>
    <property type="molecule type" value="Genomic_DNA"/>
</dbReference>
<dbReference type="RefSeq" id="NP_457931.1">
    <property type="nucleotide sequence ID" value="NC_003198.1"/>
</dbReference>
<dbReference type="RefSeq" id="WP_000186987.1">
    <property type="nucleotide sequence ID" value="NZ_WSUR01000010.1"/>
</dbReference>
<dbReference type="SMR" id="Q8Z313"/>
<dbReference type="STRING" id="220341.gene:17587611"/>
<dbReference type="KEGG" id="stt:t3496"/>
<dbReference type="KEGG" id="sty:STY3745"/>
<dbReference type="PATRIC" id="fig|220341.7.peg.3820"/>
<dbReference type="eggNOG" id="COG2265">
    <property type="taxonomic scope" value="Bacteria"/>
</dbReference>
<dbReference type="HOGENOM" id="CLU_043022_0_0_6"/>
<dbReference type="OMA" id="QCNTIFV"/>
<dbReference type="OrthoDB" id="9804590at2"/>
<dbReference type="Proteomes" id="UP000000541">
    <property type="component" value="Chromosome"/>
</dbReference>
<dbReference type="Proteomes" id="UP000002670">
    <property type="component" value="Chromosome"/>
</dbReference>
<dbReference type="GO" id="GO:0005829">
    <property type="term" value="C:cytosol"/>
    <property type="evidence" value="ECO:0007669"/>
    <property type="project" value="TreeGrafter"/>
</dbReference>
<dbReference type="GO" id="GO:0019843">
    <property type="term" value="F:rRNA binding"/>
    <property type="evidence" value="ECO:0007669"/>
    <property type="project" value="TreeGrafter"/>
</dbReference>
<dbReference type="GO" id="GO:0030697">
    <property type="term" value="F:tRNA (uracil(54)-C5)-methyltransferase activity, S-adenosyl methionine-dependent"/>
    <property type="evidence" value="ECO:0007669"/>
    <property type="project" value="UniProtKB-UniRule"/>
</dbReference>
<dbReference type="GO" id="GO:0000049">
    <property type="term" value="F:tRNA binding"/>
    <property type="evidence" value="ECO:0007669"/>
    <property type="project" value="TreeGrafter"/>
</dbReference>
<dbReference type="GO" id="GO:0030488">
    <property type="term" value="P:tRNA methylation"/>
    <property type="evidence" value="ECO:0007669"/>
    <property type="project" value="UniProtKB-UniRule"/>
</dbReference>
<dbReference type="CDD" id="cd02440">
    <property type="entry name" value="AdoMet_MTases"/>
    <property type="match status" value="1"/>
</dbReference>
<dbReference type="FunFam" id="2.40.50.1070:FF:000001">
    <property type="entry name" value="tRNA/tmRNA (uracil-C(5))-methyltransferase"/>
    <property type="match status" value="1"/>
</dbReference>
<dbReference type="FunFam" id="3.40.50.150:FF:000012">
    <property type="entry name" value="tRNA/tmRNA (uracil-C(5))-methyltransferase"/>
    <property type="match status" value="1"/>
</dbReference>
<dbReference type="Gene3D" id="2.40.50.1070">
    <property type="match status" value="1"/>
</dbReference>
<dbReference type="Gene3D" id="3.40.50.150">
    <property type="entry name" value="Vaccinia Virus protein VP39"/>
    <property type="match status" value="1"/>
</dbReference>
<dbReference type="HAMAP" id="MF_01011">
    <property type="entry name" value="RNA_methyltr_TrmA"/>
    <property type="match status" value="1"/>
</dbReference>
<dbReference type="InterPro" id="IPR030390">
    <property type="entry name" value="MeTrfase_TrmA_AS"/>
</dbReference>
<dbReference type="InterPro" id="IPR030391">
    <property type="entry name" value="MeTrfase_TrmA_CS"/>
</dbReference>
<dbReference type="InterPro" id="IPR029063">
    <property type="entry name" value="SAM-dependent_MTases_sf"/>
</dbReference>
<dbReference type="InterPro" id="IPR011869">
    <property type="entry name" value="TrmA_MeTrfase"/>
</dbReference>
<dbReference type="InterPro" id="IPR010280">
    <property type="entry name" value="U5_MeTrfase_fam"/>
</dbReference>
<dbReference type="NCBIfam" id="TIGR02143">
    <property type="entry name" value="trmA_only"/>
    <property type="match status" value="1"/>
</dbReference>
<dbReference type="PANTHER" id="PTHR47790">
    <property type="entry name" value="TRNA/TMRNA (URACIL-C(5))-METHYLTRANSFERASE"/>
    <property type="match status" value="1"/>
</dbReference>
<dbReference type="PANTHER" id="PTHR47790:SF2">
    <property type="entry name" value="TRNA_TMRNA (URACIL-C(5))-METHYLTRANSFERASE"/>
    <property type="match status" value="1"/>
</dbReference>
<dbReference type="Pfam" id="PF05958">
    <property type="entry name" value="tRNA_U5-meth_tr"/>
    <property type="match status" value="1"/>
</dbReference>
<dbReference type="SUPFAM" id="SSF53335">
    <property type="entry name" value="S-adenosyl-L-methionine-dependent methyltransferases"/>
    <property type="match status" value="1"/>
</dbReference>
<dbReference type="PROSITE" id="PS51687">
    <property type="entry name" value="SAM_MT_RNA_M5U"/>
    <property type="match status" value="1"/>
</dbReference>
<dbReference type="PROSITE" id="PS01230">
    <property type="entry name" value="TRMA_1"/>
    <property type="match status" value="1"/>
</dbReference>
<dbReference type="PROSITE" id="PS01231">
    <property type="entry name" value="TRMA_2"/>
    <property type="match status" value="1"/>
</dbReference>
<evidence type="ECO:0000255" key="1">
    <source>
        <dbReference type="HAMAP-Rule" id="MF_01011"/>
    </source>
</evidence>